<proteinExistence type="inferred from homology"/>
<evidence type="ECO:0000250" key="1"/>
<evidence type="ECO:0000305" key="2"/>
<feature type="chain" id="PRO_0000059544" description="Gluconokinase">
    <location>
        <begin position="1"/>
        <end position="513"/>
    </location>
</feature>
<feature type="binding site" evidence="1">
    <location>
        <position position="16"/>
    </location>
    <ligand>
        <name>ATP</name>
        <dbReference type="ChEBI" id="CHEBI:30616"/>
    </ligand>
</feature>
<feature type="binding site" evidence="1">
    <location>
        <position position="261"/>
    </location>
    <ligand>
        <name>ATP</name>
        <dbReference type="ChEBI" id="CHEBI:30616"/>
    </ligand>
</feature>
<feature type="binding site" evidence="1">
    <location>
        <position position="300"/>
    </location>
    <ligand>
        <name>ATP</name>
        <dbReference type="ChEBI" id="CHEBI:30616"/>
    </ligand>
</feature>
<feature type="binding site" evidence="1">
    <location>
        <begin position="412"/>
        <end position="416"/>
    </location>
    <ligand>
        <name>ATP</name>
        <dbReference type="ChEBI" id="CHEBI:30616"/>
    </ligand>
</feature>
<comment type="catalytic activity">
    <reaction>
        <text>D-gluconate + ATP = 6-phospho-D-gluconate + ADP + H(+)</text>
        <dbReference type="Rhea" id="RHEA:19433"/>
        <dbReference type="ChEBI" id="CHEBI:15378"/>
        <dbReference type="ChEBI" id="CHEBI:18391"/>
        <dbReference type="ChEBI" id="CHEBI:30616"/>
        <dbReference type="ChEBI" id="CHEBI:58759"/>
        <dbReference type="ChEBI" id="CHEBI:456216"/>
        <dbReference type="EC" id="2.7.1.12"/>
    </reaction>
</comment>
<comment type="activity regulation">
    <text>Catabolite repression by gluconate.</text>
</comment>
<comment type="pathway">
    <text>Carbohydrate acid metabolism; D-gluconate degradation.</text>
</comment>
<comment type="similarity">
    <text evidence="2">Belongs to the FGGY kinase family.</text>
</comment>
<accession>P12011</accession>
<organism>
    <name type="scientific">Bacillus subtilis (strain 168)</name>
    <dbReference type="NCBI Taxonomy" id="224308"/>
    <lineage>
        <taxon>Bacteria</taxon>
        <taxon>Bacillati</taxon>
        <taxon>Bacillota</taxon>
        <taxon>Bacilli</taxon>
        <taxon>Bacillales</taxon>
        <taxon>Bacillaceae</taxon>
        <taxon>Bacillus</taxon>
    </lineage>
</organism>
<reference key="1">
    <citation type="journal article" date="1986" name="J. Biol. Chem.">
        <title>Organization and transcription of the gluconate operon, gnt, of Bacillus subtilis.</title>
        <authorList>
            <person name="Fujita Y."/>
            <person name="Fujita T."/>
            <person name="Miwa Y."/>
            <person name="Nihashi J."/>
            <person name="Aratani Y."/>
        </authorList>
    </citation>
    <scope>NUCLEOTIDE SEQUENCE [GENOMIC DNA]</scope>
</reference>
<reference key="2">
    <citation type="journal article" date="1995" name="DNA Res.">
        <title>Cloning and sequencing of a 36-kb region of the Bacillus subtilis genome between the gnt and iol operons.</title>
        <authorList>
            <person name="Yoshida K."/>
            <person name="Seki S."/>
            <person name="Fujimura M."/>
            <person name="Miwa Y."/>
            <person name="Fujita Y."/>
        </authorList>
    </citation>
    <scope>NUCLEOTIDE SEQUENCE [GENOMIC DNA]</scope>
    <source>
        <strain>168 / BGSC1A1</strain>
    </source>
</reference>
<reference key="3">
    <citation type="journal article" date="1997" name="Nature">
        <title>The complete genome sequence of the Gram-positive bacterium Bacillus subtilis.</title>
        <authorList>
            <person name="Kunst F."/>
            <person name="Ogasawara N."/>
            <person name="Moszer I."/>
            <person name="Albertini A.M."/>
            <person name="Alloni G."/>
            <person name="Azevedo V."/>
            <person name="Bertero M.G."/>
            <person name="Bessieres P."/>
            <person name="Bolotin A."/>
            <person name="Borchert S."/>
            <person name="Borriss R."/>
            <person name="Boursier L."/>
            <person name="Brans A."/>
            <person name="Braun M."/>
            <person name="Brignell S.C."/>
            <person name="Bron S."/>
            <person name="Brouillet S."/>
            <person name="Bruschi C.V."/>
            <person name="Caldwell B."/>
            <person name="Capuano V."/>
            <person name="Carter N.M."/>
            <person name="Choi S.-K."/>
            <person name="Codani J.-J."/>
            <person name="Connerton I.F."/>
            <person name="Cummings N.J."/>
            <person name="Daniel R.A."/>
            <person name="Denizot F."/>
            <person name="Devine K.M."/>
            <person name="Duesterhoeft A."/>
            <person name="Ehrlich S.D."/>
            <person name="Emmerson P.T."/>
            <person name="Entian K.-D."/>
            <person name="Errington J."/>
            <person name="Fabret C."/>
            <person name="Ferrari E."/>
            <person name="Foulger D."/>
            <person name="Fritz C."/>
            <person name="Fujita M."/>
            <person name="Fujita Y."/>
            <person name="Fuma S."/>
            <person name="Galizzi A."/>
            <person name="Galleron N."/>
            <person name="Ghim S.-Y."/>
            <person name="Glaser P."/>
            <person name="Goffeau A."/>
            <person name="Golightly E.J."/>
            <person name="Grandi G."/>
            <person name="Guiseppi G."/>
            <person name="Guy B.J."/>
            <person name="Haga K."/>
            <person name="Haiech J."/>
            <person name="Harwood C.R."/>
            <person name="Henaut A."/>
            <person name="Hilbert H."/>
            <person name="Holsappel S."/>
            <person name="Hosono S."/>
            <person name="Hullo M.-F."/>
            <person name="Itaya M."/>
            <person name="Jones L.-M."/>
            <person name="Joris B."/>
            <person name="Karamata D."/>
            <person name="Kasahara Y."/>
            <person name="Klaerr-Blanchard M."/>
            <person name="Klein C."/>
            <person name="Kobayashi Y."/>
            <person name="Koetter P."/>
            <person name="Koningstein G."/>
            <person name="Krogh S."/>
            <person name="Kumano M."/>
            <person name="Kurita K."/>
            <person name="Lapidus A."/>
            <person name="Lardinois S."/>
            <person name="Lauber J."/>
            <person name="Lazarevic V."/>
            <person name="Lee S.-M."/>
            <person name="Levine A."/>
            <person name="Liu H."/>
            <person name="Masuda S."/>
            <person name="Mauel C."/>
            <person name="Medigue C."/>
            <person name="Medina N."/>
            <person name="Mellado R.P."/>
            <person name="Mizuno M."/>
            <person name="Moestl D."/>
            <person name="Nakai S."/>
            <person name="Noback M."/>
            <person name="Noone D."/>
            <person name="O'Reilly M."/>
            <person name="Ogawa K."/>
            <person name="Ogiwara A."/>
            <person name="Oudega B."/>
            <person name="Park S.-H."/>
            <person name="Parro V."/>
            <person name="Pohl T.M."/>
            <person name="Portetelle D."/>
            <person name="Porwollik S."/>
            <person name="Prescott A.M."/>
            <person name="Presecan E."/>
            <person name="Pujic P."/>
            <person name="Purnelle B."/>
            <person name="Rapoport G."/>
            <person name="Rey M."/>
            <person name="Reynolds S."/>
            <person name="Rieger M."/>
            <person name="Rivolta C."/>
            <person name="Rocha E."/>
            <person name="Roche B."/>
            <person name="Rose M."/>
            <person name="Sadaie Y."/>
            <person name="Sato T."/>
            <person name="Scanlan E."/>
            <person name="Schleich S."/>
            <person name="Schroeter R."/>
            <person name="Scoffone F."/>
            <person name="Sekiguchi J."/>
            <person name="Sekowska A."/>
            <person name="Seror S.J."/>
            <person name="Serror P."/>
            <person name="Shin B.-S."/>
            <person name="Soldo B."/>
            <person name="Sorokin A."/>
            <person name="Tacconi E."/>
            <person name="Takagi T."/>
            <person name="Takahashi H."/>
            <person name="Takemaru K."/>
            <person name="Takeuchi M."/>
            <person name="Tamakoshi A."/>
            <person name="Tanaka T."/>
            <person name="Terpstra P."/>
            <person name="Tognoni A."/>
            <person name="Tosato V."/>
            <person name="Uchiyama S."/>
            <person name="Vandenbol M."/>
            <person name="Vannier F."/>
            <person name="Vassarotti A."/>
            <person name="Viari A."/>
            <person name="Wambutt R."/>
            <person name="Wedler E."/>
            <person name="Wedler H."/>
            <person name="Weitzenegger T."/>
            <person name="Winters P."/>
            <person name="Wipat A."/>
            <person name="Yamamoto H."/>
            <person name="Yamane K."/>
            <person name="Yasumoto K."/>
            <person name="Yata K."/>
            <person name="Yoshida K."/>
            <person name="Yoshikawa H.-F."/>
            <person name="Zumstein E."/>
            <person name="Yoshikawa H."/>
            <person name="Danchin A."/>
        </authorList>
    </citation>
    <scope>NUCLEOTIDE SEQUENCE [LARGE SCALE GENOMIC DNA]</scope>
    <source>
        <strain>168</strain>
    </source>
</reference>
<dbReference type="EC" id="2.7.1.12"/>
<dbReference type="EMBL" id="J02584">
    <property type="protein sequence ID" value="AAA56925.1"/>
    <property type="molecule type" value="Genomic_DNA"/>
</dbReference>
<dbReference type="EMBL" id="AB005554">
    <property type="protein sequence ID" value="BAA21578.1"/>
    <property type="molecule type" value="Genomic_DNA"/>
</dbReference>
<dbReference type="EMBL" id="AL009126">
    <property type="protein sequence ID" value="CAB16043.1"/>
    <property type="molecule type" value="Genomic_DNA"/>
</dbReference>
<dbReference type="PIR" id="B26190">
    <property type="entry name" value="B26190"/>
</dbReference>
<dbReference type="RefSeq" id="NP_391886.1">
    <property type="nucleotide sequence ID" value="NC_000964.3"/>
</dbReference>
<dbReference type="RefSeq" id="WP_009968422.1">
    <property type="nucleotide sequence ID" value="NZ_OZ025638.1"/>
</dbReference>
<dbReference type="SMR" id="P12011"/>
<dbReference type="FunCoup" id="P12011">
    <property type="interactions" value="134"/>
</dbReference>
<dbReference type="STRING" id="224308.BSU40060"/>
<dbReference type="jPOST" id="P12011"/>
<dbReference type="PaxDb" id="224308-BSU40060"/>
<dbReference type="EnsemblBacteria" id="CAB16043">
    <property type="protein sequence ID" value="CAB16043"/>
    <property type="gene ID" value="BSU_40060"/>
</dbReference>
<dbReference type="GeneID" id="937713"/>
<dbReference type="KEGG" id="bsu:BSU40060"/>
<dbReference type="PATRIC" id="fig|224308.179.peg.4333"/>
<dbReference type="eggNOG" id="COG1070">
    <property type="taxonomic scope" value="Bacteria"/>
</dbReference>
<dbReference type="InParanoid" id="P12011"/>
<dbReference type="OrthoDB" id="9805576at2"/>
<dbReference type="PhylomeDB" id="P12011"/>
<dbReference type="BioCyc" id="BSUB:BSU40060-MONOMER"/>
<dbReference type="UniPathway" id="UPA00792"/>
<dbReference type="Proteomes" id="UP000001570">
    <property type="component" value="Chromosome"/>
</dbReference>
<dbReference type="GO" id="GO:0005524">
    <property type="term" value="F:ATP binding"/>
    <property type="evidence" value="ECO:0007669"/>
    <property type="project" value="UniProtKB-KW"/>
</dbReference>
<dbReference type="GO" id="GO:0046316">
    <property type="term" value="F:gluconokinase activity"/>
    <property type="evidence" value="ECO:0007669"/>
    <property type="project" value="UniProtKB-EC"/>
</dbReference>
<dbReference type="GO" id="GO:0019521">
    <property type="term" value="P:D-gluconate metabolic process"/>
    <property type="evidence" value="ECO:0007669"/>
    <property type="project" value="UniProtKB-KW"/>
</dbReference>
<dbReference type="CDD" id="cd07770">
    <property type="entry name" value="ASKHA_NBD_FGGY_GntK"/>
    <property type="match status" value="1"/>
</dbReference>
<dbReference type="Gene3D" id="3.30.420.40">
    <property type="match status" value="2"/>
</dbReference>
<dbReference type="InterPro" id="IPR043129">
    <property type="entry name" value="ATPase_NBD"/>
</dbReference>
<dbReference type="InterPro" id="IPR000577">
    <property type="entry name" value="Carb_kinase_FGGY"/>
</dbReference>
<dbReference type="InterPro" id="IPR018483">
    <property type="entry name" value="Carb_kinase_FGGY_CS"/>
</dbReference>
<dbReference type="InterPro" id="IPR018485">
    <property type="entry name" value="FGGY_C"/>
</dbReference>
<dbReference type="InterPro" id="IPR050406">
    <property type="entry name" value="FGGY_Carb_Kinase"/>
</dbReference>
<dbReference type="InterPro" id="IPR018484">
    <property type="entry name" value="FGGY_N"/>
</dbReference>
<dbReference type="InterPro" id="IPR006002">
    <property type="entry name" value="Gluconate_kinase"/>
</dbReference>
<dbReference type="NCBIfam" id="TIGR01314">
    <property type="entry name" value="gntK_FGGY"/>
    <property type="match status" value="1"/>
</dbReference>
<dbReference type="PANTHER" id="PTHR43095:SF2">
    <property type="entry name" value="GLUCONOKINASE"/>
    <property type="match status" value="1"/>
</dbReference>
<dbReference type="PANTHER" id="PTHR43095">
    <property type="entry name" value="SUGAR KINASE"/>
    <property type="match status" value="1"/>
</dbReference>
<dbReference type="Pfam" id="PF02782">
    <property type="entry name" value="FGGY_C"/>
    <property type="match status" value="1"/>
</dbReference>
<dbReference type="Pfam" id="PF00370">
    <property type="entry name" value="FGGY_N"/>
    <property type="match status" value="1"/>
</dbReference>
<dbReference type="PIRSF" id="PIRSF000538">
    <property type="entry name" value="GlpK"/>
    <property type="match status" value="1"/>
</dbReference>
<dbReference type="SUPFAM" id="SSF53067">
    <property type="entry name" value="Actin-like ATPase domain"/>
    <property type="match status" value="2"/>
</dbReference>
<dbReference type="PROSITE" id="PS00933">
    <property type="entry name" value="FGGY_KINASES_1"/>
    <property type="match status" value="1"/>
</dbReference>
<dbReference type="PROSITE" id="PS00445">
    <property type="entry name" value="FGGY_KINASES_2"/>
    <property type="match status" value="1"/>
</dbReference>
<sequence>MTSYMLGIDIGTTSTKAVLFSENGDVVQKESIGYPLYTPDISTAEQNPEEIFQAVIHTTARITKQHPEKRISFISFSSAMHSVIAIDENDKPLTPCITWADNRSEGWAHKIKEELNGHEVYKRTGTPIHPMAPLSKIAWITNERKEIASKAKKYIGIKEYIFKQLFNEYVIDYSLASATGMMNLKGLDWDEEALRIAGITPDHLSKLVPTTEIFQHCSPEIAIQMGIDPETPFVIGASDGVLSNLGVNAIKKGEIAVTIGTSGAIRTIIDKPQTDEKGRIFCYALTDKHWVIGGPVNNGGIVLRWIRDEFASSEIETATRLGIDPYDVLTKIAQRVRPGSDGLLFHPYLAGERAPLWNPDVRGSFFGLTMSHKKEHMIRAALEGVIYNLYTVFLALTECMDGPVTRIQATGGFARSEVWRQMMSDIFESEVVVPESYESSCLGACILGLYATGKIDSFDAVSDMIGSTYRHTPIEDSAKEYRTLMPIFINLSRLLENQYTQIADYQRGLITHK</sequence>
<keyword id="KW-0067">ATP-binding</keyword>
<keyword id="KW-0311">Gluconate utilization</keyword>
<keyword id="KW-0418">Kinase</keyword>
<keyword id="KW-0547">Nucleotide-binding</keyword>
<keyword id="KW-1185">Reference proteome</keyword>
<keyword id="KW-0808">Transferase</keyword>
<gene>
    <name type="primary">gntK</name>
    <name type="ordered locus">BSU40060</name>
</gene>
<protein>
    <recommendedName>
        <fullName>Gluconokinase</fullName>
        <ecNumber>2.7.1.12</ecNumber>
    </recommendedName>
    <alternativeName>
        <fullName>Gluconate kinase</fullName>
    </alternativeName>
</protein>
<name>GNTK_BACSU</name>